<protein>
    <recommendedName>
        <fullName evidence="1">Protein-export protein SecB</fullName>
    </recommendedName>
</protein>
<gene>
    <name evidence="1" type="primary">secB</name>
    <name type="ordered locus">EC55989_4076</name>
</gene>
<organism>
    <name type="scientific">Escherichia coli (strain 55989 / EAEC)</name>
    <dbReference type="NCBI Taxonomy" id="585055"/>
    <lineage>
        <taxon>Bacteria</taxon>
        <taxon>Pseudomonadati</taxon>
        <taxon>Pseudomonadota</taxon>
        <taxon>Gammaproteobacteria</taxon>
        <taxon>Enterobacterales</taxon>
        <taxon>Enterobacteriaceae</taxon>
        <taxon>Escherichia</taxon>
    </lineage>
</organism>
<accession>B7L735</accession>
<sequence>MSEQNNTEMTFQIQRIYTKDISFEAPNAPHVFQKDWQPEVKLDLDTASSQLADDVYEVVLRVTVTASLGEETAFLCEVQQGGIFSIAGIEGTQMAHCLGAYCPNILFPYARECITSMVSRGTFPQLNLAPVNFDALFMNYLQQQAGEGTEEHQDA</sequence>
<feature type="chain" id="PRO_1000148702" description="Protein-export protein SecB">
    <location>
        <begin position="1"/>
        <end position="155"/>
    </location>
</feature>
<comment type="function">
    <text evidence="1">One of the proteins required for the normal export of preproteins out of the cell cytoplasm. It is a molecular chaperone that binds to a subset of precursor proteins, maintaining them in a translocation-competent state. It also specifically binds to its receptor SecA.</text>
</comment>
<comment type="subunit">
    <text evidence="1">Homotetramer, a dimer of dimers. One homotetramer interacts with 1 SecA dimer.</text>
</comment>
<comment type="subcellular location">
    <subcellularLocation>
        <location evidence="1">Cytoplasm</location>
    </subcellularLocation>
</comment>
<comment type="similarity">
    <text evidence="1">Belongs to the SecB family.</text>
</comment>
<name>SECB_ECO55</name>
<dbReference type="EMBL" id="CU928145">
    <property type="protein sequence ID" value="CAV00597.1"/>
    <property type="molecule type" value="Genomic_DNA"/>
</dbReference>
<dbReference type="RefSeq" id="WP_000003377.1">
    <property type="nucleotide sequence ID" value="NC_011748.1"/>
</dbReference>
<dbReference type="SMR" id="B7L735"/>
<dbReference type="GeneID" id="86944403"/>
<dbReference type="KEGG" id="eck:EC55989_4076"/>
<dbReference type="HOGENOM" id="CLU_111574_1_0_6"/>
<dbReference type="Proteomes" id="UP000000746">
    <property type="component" value="Chromosome"/>
</dbReference>
<dbReference type="GO" id="GO:0005737">
    <property type="term" value="C:cytoplasm"/>
    <property type="evidence" value="ECO:0007669"/>
    <property type="project" value="UniProtKB-SubCell"/>
</dbReference>
<dbReference type="GO" id="GO:0051082">
    <property type="term" value="F:unfolded protein binding"/>
    <property type="evidence" value="ECO:0007669"/>
    <property type="project" value="InterPro"/>
</dbReference>
<dbReference type="GO" id="GO:0006457">
    <property type="term" value="P:protein folding"/>
    <property type="evidence" value="ECO:0007669"/>
    <property type="project" value="UniProtKB-UniRule"/>
</dbReference>
<dbReference type="GO" id="GO:0051262">
    <property type="term" value="P:protein tetramerization"/>
    <property type="evidence" value="ECO:0007669"/>
    <property type="project" value="InterPro"/>
</dbReference>
<dbReference type="GO" id="GO:0015031">
    <property type="term" value="P:protein transport"/>
    <property type="evidence" value="ECO:0007669"/>
    <property type="project" value="UniProtKB-UniRule"/>
</dbReference>
<dbReference type="CDD" id="cd00557">
    <property type="entry name" value="Translocase_SecB"/>
    <property type="match status" value="1"/>
</dbReference>
<dbReference type="FunFam" id="3.10.420.10:FF:000001">
    <property type="entry name" value="Protein-export chaperone SecB"/>
    <property type="match status" value="1"/>
</dbReference>
<dbReference type="Gene3D" id="3.10.420.10">
    <property type="entry name" value="SecB-like"/>
    <property type="match status" value="1"/>
</dbReference>
<dbReference type="HAMAP" id="MF_00821">
    <property type="entry name" value="SecB"/>
    <property type="match status" value="1"/>
</dbReference>
<dbReference type="InterPro" id="IPR003708">
    <property type="entry name" value="SecB"/>
</dbReference>
<dbReference type="InterPro" id="IPR035958">
    <property type="entry name" value="SecB-like_sf"/>
</dbReference>
<dbReference type="NCBIfam" id="NF004390">
    <property type="entry name" value="PRK05751.1-1"/>
    <property type="match status" value="1"/>
</dbReference>
<dbReference type="NCBIfam" id="NF004393">
    <property type="entry name" value="PRK05751.1-4"/>
    <property type="match status" value="1"/>
</dbReference>
<dbReference type="NCBIfam" id="TIGR00809">
    <property type="entry name" value="secB"/>
    <property type="match status" value="1"/>
</dbReference>
<dbReference type="PANTHER" id="PTHR36918">
    <property type="match status" value="1"/>
</dbReference>
<dbReference type="PANTHER" id="PTHR36918:SF1">
    <property type="entry name" value="PROTEIN-EXPORT PROTEIN SECB"/>
    <property type="match status" value="1"/>
</dbReference>
<dbReference type="Pfam" id="PF02556">
    <property type="entry name" value="SecB"/>
    <property type="match status" value="1"/>
</dbReference>
<dbReference type="PRINTS" id="PR01594">
    <property type="entry name" value="SECBCHAPRONE"/>
</dbReference>
<dbReference type="SUPFAM" id="SSF54611">
    <property type="entry name" value="SecB-like"/>
    <property type="match status" value="1"/>
</dbReference>
<proteinExistence type="inferred from homology"/>
<keyword id="KW-0143">Chaperone</keyword>
<keyword id="KW-0963">Cytoplasm</keyword>
<keyword id="KW-0653">Protein transport</keyword>
<keyword id="KW-1185">Reference proteome</keyword>
<keyword id="KW-0811">Translocation</keyword>
<keyword id="KW-0813">Transport</keyword>
<evidence type="ECO:0000255" key="1">
    <source>
        <dbReference type="HAMAP-Rule" id="MF_00821"/>
    </source>
</evidence>
<reference key="1">
    <citation type="journal article" date="2009" name="PLoS Genet.">
        <title>Organised genome dynamics in the Escherichia coli species results in highly diverse adaptive paths.</title>
        <authorList>
            <person name="Touchon M."/>
            <person name="Hoede C."/>
            <person name="Tenaillon O."/>
            <person name="Barbe V."/>
            <person name="Baeriswyl S."/>
            <person name="Bidet P."/>
            <person name="Bingen E."/>
            <person name="Bonacorsi S."/>
            <person name="Bouchier C."/>
            <person name="Bouvet O."/>
            <person name="Calteau A."/>
            <person name="Chiapello H."/>
            <person name="Clermont O."/>
            <person name="Cruveiller S."/>
            <person name="Danchin A."/>
            <person name="Diard M."/>
            <person name="Dossat C."/>
            <person name="Karoui M.E."/>
            <person name="Frapy E."/>
            <person name="Garry L."/>
            <person name="Ghigo J.M."/>
            <person name="Gilles A.M."/>
            <person name="Johnson J."/>
            <person name="Le Bouguenec C."/>
            <person name="Lescat M."/>
            <person name="Mangenot S."/>
            <person name="Martinez-Jehanne V."/>
            <person name="Matic I."/>
            <person name="Nassif X."/>
            <person name="Oztas S."/>
            <person name="Petit M.A."/>
            <person name="Pichon C."/>
            <person name="Rouy Z."/>
            <person name="Ruf C.S."/>
            <person name="Schneider D."/>
            <person name="Tourret J."/>
            <person name="Vacherie B."/>
            <person name="Vallenet D."/>
            <person name="Medigue C."/>
            <person name="Rocha E.P.C."/>
            <person name="Denamur E."/>
        </authorList>
    </citation>
    <scope>NUCLEOTIDE SEQUENCE [LARGE SCALE GENOMIC DNA]</scope>
    <source>
        <strain>55989 / EAEC</strain>
    </source>
</reference>